<reference key="1">
    <citation type="journal article" date="2007" name="J. Bacteriol.">
        <title>The complete genome sequence of Bacillus thuringiensis Al Hakam.</title>
        <authorList>
            <person name="Challacombe J.F."/>
            <person name="Altherr M.R."/>
            <person name="Xie G."/>
            <person name="Bhotika S.S."/>
            <person name="Brown N."/>
            <person name="Bruce D."/>
            <person name="Campbell C.S."/>
            <person name="Campbell M.L."/>
            <person name="Chen J."/>
            <person name="Chertkov O."/>
            <person name="Cleland C."/>
            <person name="Dimitrijevic M."/>
            <person name="Doggett N.A."/>
            <person name="Fawcett J.J."/>
            <person name="Glavina T."/>
            <person name="Goodwin L.A."/>
            <person name="Green L.D."/>
            <person name="Han C.S."/>
            <person name="Hill K.K."/>
            <person name="Hitchcock P."/>
            <person name="Jackson P.J."/>
            <person name="Keim P."/>
            <person name="Kewalramani A.R."/>
            <person name="Longmire J."/>
            <person name="Lucas S."/>
            <person name="Malfatti S."/>
            <person name="Martinez D."/>
            <person name="McMurry K."/>
            <person name="Meincke L.J."/>
            <person name="Misra M."/>
            <person name="Moseman B.L."/>
            <person name="Mundt M."/>
            <person name="Munk A.C."/>
            <person name="Okinaka R.T."/>
            <person name="Parson-Quintana B."/>
            <person name="Reilly L.P."/>
            <person name="Richardson P."/>
            <person name="Robinson D.L."/>
            <person name="Saunders E."/>
            <person name="Tapia R."/>
            <person name="Tesmer J.G."/>
            <person name="Thayer N."/>
            <person name="Thompson L.S."/>
            <person name="Tice H."/>
            <person name="Ticknor L.O."/>
            <person name="Wills P.L."/>
            <person name="Gilna P."/>
            <person name="Brettin T.S."/>
        </authorList>
    </citation>
    <scope>NUCLEOTIDE SEQUENCE [LARGE SCALE GENOMIC DNA]</scope>
    <source>
        <strain>Al Hakam</strain>
    </source>
</reference>
<accession>A0RD69</accession>
<sequence>MQKVKAAIIGSGNIGTDLMYKLRKSEVIDLNAMIGIDVESDGLKRAKEAGYEVFDNGIQAIIDNPSLADIVFDATSAKAHRYHAKTLEELEKIVIDLTPAAYGPFVCPAIRNNNFLDKQNVNMITCGGQATIPIVHAINGVANVTYAEIVATISSLSAGPGTRANIDEFTITTKRGIEEVGGADKGKAIIILNPAEPPILMRDTIYCEVKDMDEVSIYEAIHKMVERVRTYVPGYSLKQEPMFDGNRVTVFLEVEGAGDYFPPYAGNLDIMTAAALKVGEEFATQIISEKKRGVMNEAK</sequence>
<gene>
    <name type="ordered locus">BALH_1843</name>
</gene>
<comment type="catalytic activity">
    <reaction evidence="1">
        <text>acetaldehyde + NAD(+) + CoA = acetyl-CoA + NADH + H(+)</text>
        <dbReference type="Rhea" id="RHEA:23288"/>
        <dbReference type="ChEBI" id="CHEBI:15343"/>
        <dbReference type="ChEBI" id="CHEBI:15378"/>
        <dbReference type="ChEBI" id="CHEBI:57287"/>
        <dbReference type="ChEBI" id="CHEBI:57288"/>
        <dbReference type="ChEBI" id="CHEBI:57540"/>
        <dbReference type="ChEBI" id="CHEBI:57945"/>
        <dbReference type="EC" id="1.2.1.10"/>
    </reaction>
</comment>
<comment type="similarity">
    <text evidence="1">Belongs to the acetaldehyde dehydrogenase family.</text>
</comment>
<dbReference type="EC" id="1.2.1.10" evidence="1"/>
<dbReference type="EMBL" id="CP000485">
    <property type="protein sequence ID" value="ABK85162.1"/>
    <property type="molecule type" value="Genomic_DNA"/>
</dbReference>
<dbReference type="RefSeq" id="WP_001174433.1">
    <property type="nucleotide sequence ID" value="NC_008600.1"/>
</dbReference>
<dbReference type="SMR" id="A0RD69"/>
<dbReference type="KEGG" id="btl:BALH_1843"/>
<dbReference type="HOGENOM" id="CLU_062208_0_0_9"/>
<dbReference type="GO" id="GO:0008774">
    <property type="term" value="F:acetaldehyde dehydrogenase (acetylating) activity"/>
    <property type="evidence" value="ECO:0007669"/>
    <property type="project" value="UniProtKB-UniRule"/>
</dbReference>
<dbReference type="GO" id="GO:0051287">
    <property type="term" value="F:NAD binding"/>
    <property type="evidence" value="ECO:0007669"/>
    <property type="project" value="UniProtKB-UniRule"/>
</dbReference>
<dbReference type="GO" id="GO:0009056">
    <property type="term" value="P:catabolic process"/>
    <property type="evidence" value="ECO:0007669"/>
    <property type="project" value="UniProtKB-KW"/>
</dbReference>
<dbReference type="CDD" id="cd23933">
    <property type="entry name" value="ALDH_C"/>
    <property type="match status" value="1"/>
</dbReference>
<dbReference type="Gene3D" id="3.30.360.10">
    <property type="entry name" value="Dihydrodipicolinate Reductase, domain 2"/>
    <property type="match status" value="1"/>
</dbReference>
<dbReference type="Gene3D" id="3.40.50.720">
    <property type="entry name" value="NAD(P)-binding Rossmann-like Domain"/>
    <property type="match status" value="1"/>
</dbReference>
<dbReference type="HAMAP" id="MF_01657">
    <property type="entry name" value="Ac_ald_DH_ac"/>
    <property type="match status" value="1"/>
</dbReference>
<dbReference type="InterPro" id="IPR003361">
    <property type="entry name" value="Acetaldehyde_dehydrogenase"/>
</dbReference>
<dbReference type="InterPro" id="IPR015426">
    <property type="entry name" value="Acetylaldehyde_DH_C"/>
</dbReference>
<dbReference type="InterPro" id="IPR036291">
    <property type="entry name" value="NAD(P)-bd_dom_sf"/>
</dbReference>
<dbReference type="InterPro" id="IPR000534">
    <property type="entry name" value="Semialdehyde_DH_NAD-bd"/>
</dbReference>
<dbReference type="NCBIfam" id="TIGR03215">
    <property type="entry name" value="ac_ald_DH_ac"/>
    <property type="match status" value="1"/>
</dbReference>
<dbReference type="NCBIfam" id="NF006157">
    <property type="entry name" value="PRK08300.1"/>
    <property type="match status" value="1"/>
</dbReference>
<dbReference type="Pfam" id="PF09290">
    <property type="entry name" value="AcetDehyd-dimer"/>
    <property type="match status" value="1"/>
</dbReference>
<dbReference type="Pfam" id="PF01118">
    <property type="entry name" value="Semialdhyde_dh"/>
    <property type="match status" value="1"/>
</dbReference>
<dbReference type="PIRSF" id="PIRSF015689">
    <property type="entry name" value="Actaldh_dh_actl"/>
    <property type="match status" value="1"/>
</dbReference>
<dbReference type="SMART" id="SM00859">
    <property type="entry name" value="Semialdhyde_dh"/>
    <property type="match status" value="1"/>
</dbReference>
<dbReference type="SUPFAM" id="SSF55347">
    <property type="entry name" value="Glyceraldehyde-3-phosphate dehydrogenase-like, C-terminal domain"/>
    <property type="match status" value="1"/>
</dbReference>
<dbReference type="SUPFAM" id="SSF51735">
    <property type="entry name" value="NAD(P)-binding Rossmann-fold domains"/>
    <property type="match status" value="1"/>
</dbReference>
<proteinExistence type="inferred from homology"/>
<evidence type="ECO:0000255" key="1">
    <source>
        <dbReference type="HAMAP-Rule" id="MF_01657"/>
    </source>
</evidence>
<feature type="chain" id="PRO_0000387627" description="Acetaldehyde dehydrogenase">
    <location>
        <begin position="1"/>
        <end position="299"/>
    </location>
</feature>
<feature type="active site" description="Acyl-thioester intermediate" evidence="1">
    <location>
        <position position="126"/>
    </location>
</feature>
<feature type="binding site" evidence="1">
    <location>
        <begin position="11"/>
        <end position="14"/>
    </location>
    <ligand>
        <name>NAD(+)</name>
        <dbReference type="ChEBI" id="CHEBI:57540"/>
    </ligand>
</feature>
<feature type="binding site" evidence="1">
    <location>
        <begin position="157"/>
        <end position="165"/>
    </location>
    <ligand>
        <name>NAD(+)</name>
        <dbReference type="ChEBI" id="CHEBI:57540"/>
    </ligand>
</feature>
<feature type="binding site" evidence="1">
    <location>
        <position position="267"/>
    </location>
    <ligand>
        <name>NAD(+)</name>
        <dbReference type="ChEBI" id="CHEBI:57540"/>
    </ligand>
</feature>
<name>ACDH_BACAH</name>
<organism>
    <name type="scientific">Bacillus thuringiensis (strain Al Hakam)</name>
    <dbReference type="NCBI Taxonomy" id="412694"/>
    <lineage>
        <taxon>Bacteria</taxon>
        <taxon>Bacillati</taxon>
        <taxon>Bacillota</taxon>
        <taxon>Bacilli</taxon>
        <taxon>Bacillales</taxon>
        <taxon>Bacillaceae</taxon>
        <taxon>Bacillus</taxon>
        <taxon>Bacillus cereus group</taxon>
    </lineage>
</organism>
<protein>
    <recommendedName>
        <fullName evidence="1">Acetaldehyde dehydrogenase</fullName>
        <ecNumber evidence="1">1.2.1.10</ecNumber>
    </recommendedName>
    <alternativeName>
        <fullName evidence="1">Acetaldehyde dehydrogenase [acetylating]</fullName>
    </alternativeName>
</protein>
<keyword id="KW-0058">Aromatic hydrocarbons catabolism</keyword>
<keyword id="KW-0520">NAD</keyword>
<keyword id="KW-0560">Oxidoreductase</keyword>